<sequence>MTGPGELAGSRPVDAHLENGAGIDVVLVTGLSGAGRGTAAKVLEDLGWYVADNLPPQLITRMVDLGMDAGSRITQLAVVMDVRSRGFTGDLDSVRTELATRNIAPRVVFMEASDDMLVRRYEQNRRSHPLQGDQTLAEGIAAERRMLAPVRATADLIIDTSTLSVRALRETIERAFGGGANATISVTVESFGFKYGLPMDADMVMDVRFLPNPHWVDELRPRTGQDPAVRDYVLGQPGAAEFLDAYHRLLSLVVDGYRREGKRYMTVAIGCTGGKHRSVAIAEALMQRLQAQHGEAQLSVRVLHRDLGRE</sequence>
<reference key="1">
    <citation type="journal article" date="2005" name="Proc. Natl. Acad. Sci. U.S.A.">
        <title>The complete genome sequence of Mycobacterium avium subspecies paratuberculosis.</title>
        <authorList>
            <person name="Li L."/>
            <person name="Bannantine J.P."/>
            <person name="Zhang Q."/>
            <person name="Amonsin A."/>
            <person name="May B.J."/>
            <person name="Alt D."/>
            <person name="Banerji N."/>
            <person name="Kanjilal S."/>
            <person name="Kapur V."/>
        </authorList>
    </citation>
    <scope>NUCLEOTIDE SEQUENCE [LARGE SCALE GENOMIC DNA]</scope>
    <source>
        <strain>ATCC BAA-968 / K-10</strain>
    </source>
</reference>
<dbReference type="EMBL" id="AE016958">
    <property type="protein sequence ID" value="AAS03464.1"/>
    <property type="molecule type" value="Genomic_DNA"/>
</dbReference>
<dbReference type="SMR" id="Q741E4"/>
<dbReference type="STRING" id="262316.MAP_1147"/>
<dbReference type="KEGG" id="mpa:MAP_1147"/>
<dbReference type="eggNOG" id="COG1660">
    <property type="taxonomic scope" value="Bacteria"/>
</dbReference>
<dbReference type="HOGENOM" id="CLU_059558_0_0_11"/>
<dbReference type="Proteomes" id="UP000000580">
    <property type="component" value="Chromosome"/>
</dbReference>
<dbReference type="GO" id="GO:0005524">
    <property type="term" value="F:ATP binding"/>
    <property type="evidence" value="ECO:0007669"/>
    <property type="project" value="UniProtKB-UniRule"/>
</dbReference>
<dbReference type="GO" id="GO:0005525">
    <property type="term" value="F:GTP binding"/>
    <property type="evidence" value="ECO:0007669"/>
    <property type="project" value="UniProtKB-UniRule"/>
</dbReference>
<dbReference type="HAMAP" id="MF_00636">
    <property type="entry name" value="RapZ_like"/>
    <property type="match status" value="1"/>
</dbReference>
<dbReference type="InterPro" id="IPR027417">
    <property type="entry name" value="P-loop_NTPase"/>
</dbReference>
<dbReference type="InterPro" id="IPR005337">
    <property type="entry name" value="RapZ-like"/>
</dbReference>
<dbReference type="InterPro" id="IPR053930">
    <property type="entry name" value="RapZ-like_N"/>
</dbReference>
<dbReference type="InterPro" id="IPR053931">
    <property type="entry name" value="RapZ_C"/>
</dbReference>
<dbReference type="NCBIfam" id="NF003828">
    <property type="entry name" value="PRK05416.1"/>
    <property type="match status" value="1"/>
</dbReference>
<dbReference type="PANTHER" id="PTHR30448">
    <property type="entry name" value="RNASE ADAPTER PROTEIN RAPZ"/>
    <property type="match status" value="1"/>
</dbReference>
<dbReference type="PANTHER" id="PTHR30448:SF0">
    <property type="entry name" value="RNASE ADAPTER PROTEIN RAPZ"/>
    <property type="match status" value="1"/>
</dbReference>
<dbReference type="Pfam" id="PF22740">
    <property type="entry name" value="PapZ_C"/>
    <property type="match status" value="1"/>
</dbReference>
<dbReference type="Pfam" id="PF03668">
    <property type="entry name" value="RapZ-like_N"/>
    <property type="match status" value="1"/>
</dbReference>
<dbReference type="PIRSF" id="PIRSF005052">
    <property type="entry name" value="P-loopkin"/>
    <property type="match status" value="1"/>
</dbReference>
<dbReference type="SUPFAM" id="SSF52540">
    <property type="entry name" value="P-loop containing nucleoside triphosphate hydrolases"/>
    <property type="match status" value="1"/>
</dbReference>
<gene>
    <name type="ordered locus">MAP_1147</name>
</gene>
<protein>
    <recommendedName>
        <fullName evidence="1">Nucleotide-binding protein MAP_1147</fullName>
    </recommendedName>
</protein>
<keyword id="KW-0067">ATP-binding</keyword>
<keyword id="KW-0342">GTP-binding</keyword>
<keyword id="KW-0547">Nucleotide-binding</keyword>
<keyword id="KW-1185">Reference proteome</keyword>
<accession>Q741E4</accession>
<name>Y1147_MYCPA</name>
<proteinExistence type="inferred from homology"/>
<feature type="chain" id="PRO_0000107731" description="Nucleotide-binding protein MAP_1147">
    <location>
        <begin position="1"/>
        <end position="310"/>
    </location>
</feature>
<feature type="binding site" evidence="1">
    <location>
        <begin position="30"/>
        <end position="37"/>
    </location>
    <ligand>
        <name>ATP</name>
        <dbReference type="ChEBI" id="CHEBI:30616"/>
    </ligand>
</feature>
<feature type="binding site" evidence="1">
    <location>
        <begin position="81"/>
        <end position="84"/>
    </location>
    <ligand>
        <name>GTP</name>
        <dbReference type="ChEBI" id="CHEBI:37565"/>
    </ligand>
</feature>
<evidence type="ECO:0000255" key="1">
    <source>
        <dbReference type="HAMAP-Rule" id="MF_00636"/>
    </source>
</evidence>
<organism>
    <name type="scientific">Mycolicibacterium paratuberculosis (strain ATCC BAA-968 / K-10)</name>
    <name type="common">Mycobacterium paratuberculosis</name>
    <dbReference type="NCBI Taxonomy" id="262316"/>
    <lineage>
        <taxon>Bacteria</taxon>
        <taxon>Bacillati</taxon>
        <taxon>Actinomycetota</taxon>
        <taxon>Actinomycetes</taxon>
        <taxon>Mycobacteriales</taxon>
        <taxon>Mycobacteriaceae</taxon>
        <taxon>Mycobacterium</taxon>
        <taxon>Mycobacterium avium complex (MAC)</taxon>
    </lineage>
</organism>
<comment type="function">
    <text evidence="1">Displays ATPase and GTPase activities.</text>
</comment>
<comment type="similarity">
    <text evidence="1">Belongs to the RapZ-like family.</text>
</comment>